<organism>
    <name type="scientific">Paramagnetospirillum magneticum (strain ATCC 700264 / AMB-1)</name>
    <name type="common">Magnetospirillum magneticum</name>
    <dbReference type="NCBI Taxonomy" id="342108"/>
    <lineage>
        <taxon>Bacteria</taxon>
        <taxon>Pseudomonadati</taxon>
        <taxon>Pseudomonadota</taxon>
        <taxon>Alphaproteobacteria</taxon>
        <taxon>Rhodospirillales</taxon>
        <taxon>Magnetospirillaceae</taxon>
        <taxon>Paramagnetospirillum</taxon>
    </lineage>
</organism>
<keyword id="KW-0274">FAD</keyword>
<keyword id="KW-0285">Flavoprotein</keyword>
<keyword id="KW-0521">NADP</keyword>
<keyword id="KW-0560">Oxidoreductase</keyword>
<proteinExistence type="inferred from homology"/>
<feature type="chain" id="PRO_0000364880" description="Ferredoxin--NADP reductase">
    <location>
        <begin position="1"/>
        <end position="337"/>
    </location>
</feature>
<feature type="binding site" evidence="1">
    <location>
        <position position="35"/>
    </location>
    <ligand>
        <name>FAD</name>
        <dbReference type="ChEBI" id="CHEBI:57692"/>
    </ligand>
</feature>
<feature type="binding site" evidence="1">
    <location>
        <position position="43"/>
    </location>
    <ligand>
        <name>FAD</name>
        <dbReference type="ChEBI" id="CHEBI:57692"/>
    </ligand>
</feature>
<feature type="binding site" evidence="1">
    <location>
        <position position="48"/>
    </location>
    <ligand>
        <name>FAD</name>
        <dbReference type="ChEBI" id="CHEBI:57692"/>
    </ligand>
</feature>
<feature type="binding site" evidence="1">
    <location>
        <position position="88"/>
    </location>
    <ligand>
        <name>FAD</name>
        <dbReference type="ChEBI" id="CHEBI:57692"/>
    </ligand>
</feature>
<feature type="binding site" evidence="1">
    <location>
        <position position="123"/>
    </location>
    <ligand>
        <name>FAD</name>
        <dbReference type="ChEBI" id="CHEBI:57692"/>
    </ligand>
</feature>
<feature type="binding site" evidence="1">
    <location>
        <position position="289"/>
    </location>
    <ligand>
        <name>FAD</name>
        <dbReference type="ChEBI" id="CHEBI:57692"/>
    </ligand>
</feature>
<feature type="binding site" evidence="1">
    <location>
        <position position="330"/>
    </location>
    <ligand>
        <name>FAD</name>
        <dbReference type="ChEBI" id="CHEBI:57692"/>
    </ligand>
</feature>
<reference key="1">
    <citation type="journal article" date="2005" name="DNA Res.">
        <title>Complete genome sequence of the facultative anaerobic magnetotactic bacterium Magnetospirillum sp. strain AMB-1.</title>
        <authorList>
            <person name="Matsunaga T."/>
            <person name="Okamura Y."/>
            <person name="Fukuda Y."/>
            <person name="Wahyudi A.T."/>
            <person name="Murase Y."/>
            <person name="Takeyama H."/>
        </authorList>
    </citation>
    <scope>NUCLEOTIDE SEQUENCE [LARGE SCALE GENOMIC DNA]</scope>
    <source>
        <strain>ATCC 700264 / AMB-1</strain>
    </source>
</reference>
<sequence length="337" mass="35379">MAQHETDAVIVGAGPVGLFAVFQCGMVKVRCHVVDALEAVGGQLSALYPEKPIYDIPGHPSILAADLVERLSEQAAPFAPTYHFGTQVSTLSRLDDGRWLCGLSNGDSIAARAVIICAGGGAFGPNRPPLDGLEQFEGTGVFYLVRKREDFRGKKVVIAGGGDSAVDWAISLSEVAAKVMVVHRRPKFRAAPESEARLKQLAETGAVELVVPYQLHGLEGENGTLSAVVVATLEGETKSLPADVLLPFYGLSSDLGPIAQWNLGMDRNLIAVDPATGATDAPGIYAAGDICTYPGKLKLILSGFAEAARVAHSAHDVVHPGEALHFEHSTTSGVPKG</sequence>
<name>FENR_PARM1</name>
<accession>Q2W0C9</accession>
<evidence type="ECO:0000255" key="1">
    <source>
        <dbReference type="HAMAP-Rule" id="MF_01685"/>
    </source>
</evidence>
<comment type="catalytic activity">
    <reaction evidence="1">
        <text>2 reduced [2Fe-2S]-[ferredoxin] + NADP(+) + H(+) = 2 oxidized [2Fe-2S]-[ferredoxin] + NADPH</text>
        <dbReference type="Rhea" id="RHEA:20125"/>
        <dbReference type="Rhea" id="RHEA-COMP:10000"/>
        <dbReference type="Rhea" id="RHEA-COMP:10001"/>
        <dbReference type="ChEBI" id="CHEBI:15378"/>
        <dbReference type="ChEBI" id="CHEBI:33737"/>
        <dbReference type="ChEBI" id="CHEBI:33738"/>
        <dbReference type="ChEBI" id="CHEBI:57783"/>
        <dbReference type="ChEBI" id="CHEBI:58349"/>
        <dbReference type="EC" id="1.18.1.2"/>
    </reaction>
</comment>
<comment type="cofactor">
    <cofactor evidence="1">
        <name>FAD</name>
        <dbReference type="ChEBI" id="CHEBI:57692"/>
    </cofactor>
    <text evidence="1">Binds 1 FAD per subunit.</text>
</comment>
<comment type="subunit">
    <text evidence="1">Homodimer.</text>
</comment>
<comment type="similarity">
    <text evidence="1">Belongs to the ferredoxin--NADP reductase type 2 family.</text>
</comment>
<gene>
    <name type="ordered locus">amb3892</name>
</gene>
<dbReference type="EC" id="1.18.1.2" evidence="1"/>
<dbReference type="EMBL" id="AP007255">
    <property type="protein sequence ID" value="BAE52696.1"/>
    <property type="molecule type" value="Genomic_DNA"/>
</dbReference>
<dbReference type="RefSeq" id="WP_011386246.1">
    <property type="nucleotide sequence ID" value="NC_007626.1"/>
</dbReference>
<dbReference type="SMR" id="Q2W0C9"/>
<dbReference type="STRING" id="342108.amb3892"/>
<dbReference type="KEGG" id="mag:amb3892"/>
<dbReference type="HOGENOM" id="CLU_031864_5_5_5"/>
<dbReference type="OrthoDB" id="9806179at2"/>
<dbReference type="Proteomes" id="UP000007058">
    <property type="component" value="Chromosome"/>
</dbReference>
<dbReference type="GO" id="GO:0004324">
    <property type="term" value="F:ferredoxin-NADP+ reductase activity"/>
    <property type="evidence" value="ECO:0007669"/>
    <property type="project" value="UniProtKB-UniRule"/>
</dbReference>
<dbReference type="GO" id="GO:0050660">
    <property type="term" value="F:flavin adenine dinucleotide binding"/>
    <property type="evidence" value="ECO:0007669"/>
    <property type="project" value="UniProtKB-UniRule"/>
</dbReference>
<dbReference type="GO" id="GO:0050661">
    <property type="term" value="F:NADP binding"/>
    <property type="evidence" value="ECO:0007669"/>
    <property type="project" value="UniProtKB-UniRule"/>
</dbReference>
<dbReference type="Gene3D" id="3.50.50.60">
    <property type="entry name" value="FAD/NAD(P)-binding domain"/>
    <property type="match status" value="2"/>
</dbReference>
<dbReference type="HAMAP" id="MF_01685">
    <property type="entry name" value="FENR2"/>
    <property type="match status" value="1"/>
</dbReference>
<dbReference type="InterPro" id="IPR036188">
    <property type="entry name" value="FAD/NAD-bd_sf"/>
</dbReference>
<dbReference type="InterPro" id="IPR023753">
    <property type="entry name" value="FAD/NAD-binding_dom"/>
</dbReference>
<dbReference type="InterPro" id="IPR022890">
    <property type="entry name" value="Fd--NADP_Rdtase_type_2"/>
</dbReference>
<dbReference type="InterPro" id="IPR050097">
    <property type="entry name" value="Ferredoxin-NADP_redctase_2"/>
</dbReference>
<dbReference type="PANTHER" id="PTHR48105">
    <property type="entry name" value="THIOREDOXIN REDUCTASE 1-RELATED-RELATED"/>
    <property type="match status" value="1"/>
</dbReference>
<dbReference type="Pfam" id="PF07992">
    <property type="entry name" value="Pyr_redox_2"/>
    <property type="match status" value="1"/>
</dbReference>
<dbReference type="PRINTS" id="PR00368">
    <property type="entry name" value="FADPNR"/>
</dbReference>
<dbReference type="PRINTS" id="PR00469">
    <property type="entry name" value="PNDRDTASEII"/>
</dbReference>
<dbReference type="SUPFAM" id="SSF51905">
    <property type="entry name" value="FAD/NAD(P)-binding domain"/>
    <property type="match status" value="1"/>
</dbReference>
<protein>
    <recommendedName>
        <fullName evidence="1">Ferredoxin--NADP reductase</fullName>
        <shortName evidence="1">FNR</shortName>
        <shortName evidence="1">Fd-NADP(+) reductase</shortName>
        <ecNumber evidence="1">1.18.1.2</ecNumber>
    </recommendedName>
</protein>